<sequence>MPAVRIKICGITRVEDALAAAAAGADAIGLVFYAKSPRAVNIHRAREIVRALPPFVTSVGLFVNASRCELGEILDAVPLDLLQFHGDERAEDCEGHRRPYLKALRMKPGDDILARVADYPGAAGILLDTYVEGVPGGTGAAFDWSLVPAGLGKPLVLAGGLTANNVADAVARVQPYAVDVSGGVEASKGIKDAAKVRAFVDAVRSRGRDEA</sequence>
<protein>
    <recommendedName>
        <fullName evidence="1">N-(5'-phosphoribosyl)anthranilate isomerase</fullName>
        <shortName evidence="1">PRAI</shortName>
        <ecNumber evidence="1">5.3.1.24</ecNumber>
    </recommendedName>
</protein>
<name>TRPF_PSEP7</name>
<gene>
    <name evidence="1" type="primary">trpF</name>
    <name type="ordered locus">PSPA7_2020</name>
</gene>
<accession>A6V2W1</accession>
<comment type="catalytic activity">
    <reaction evidence="1">
        <text>N-(5-phospho-beta-D-ribosyl)anthranilate = 1-(2-carboxyphenylamino)-1-deoxy-D-ribulose 5-phosphate</text>
        <dbReference type="Rhea" id="RHEA:21540"/>
        <dbReference type="ChEBI" id="CHEBI:18277"/>
        <dbReference type="ChEBI" id="CHEBI:58613"/>
        <dbReference type="EC" id="5.3.1.24"/>
    </reaction>
</comment>
<comment type="pathway">
    <text evidence="1">Amino-acid biosynthesis; L-tryptophan biosynthesis; L-tryptophan from chorismate: step 3/5.</text>
</comment>
<comment type="similarity">
    <text evidence="1">Belongs to the TrpF family.</text>
</comment>
<feature type="chain" id="PRO_1000018620" description="N-(5'-phosphoribosyl)anthranilate isomerase">
    <location>
        <begin position="1"/>
        <end position="211"/>
    </location>
</feature>
<dbReference type="EC" id="5.3.1.24" evidence="1"/>
<dbReference type="EMBL" id="CP000744">
    <property type="protein sequence ID" value="ABR82430.1"/>
    <property type="molecule type" value="Genomic_DNA"/>
</dbReference>
<dbReference type="RefSeq" id="WP_012075058.1">
    <property type="nucleotide sequence ID" value="NC_009656.1"/>
</dbReference>
<dbReference type="SMR" id="A6V2W1"/>
<dbReference type="KEGG" id="pap:PSPA7_2020"/>
<dbReference type="HOGENOM" id="CLU_076364_2_0_6"/>
<dbReference type="UniPathway" id="UPA00035">
    <property type="reaction ID" value="UER00042"/>
</dbReference>
<dbReference type="Proteomes" id="UP000001582">
    <property type="component" value="Chromosome"/>
</dbReference>
<dbReference type="GO" id="GO:0004640">
    <property type="term" value="F:phosphoribosylanthranilate isomerase activity"/>
    <property type="evidence" value="ECO:0007669"/>
    <property type="project" value="UniProtKB-UniRule"/>
</dbReference>
<dbReference type="GO" id="GO:0000162">
    <property type="term" value="P:L-tryptophan biosynthetic process"/>
    <property type="evidence" value="ECO:0007669"/>
    <property type="project" value="UniProtKB-UniRule"/>
</dbReference>
<dbReference type="CDD" id="cd00405">
    <property type="entry name" value="PRAI"/>
    <property type="match status" value="1"/>
</dbReference>
<dbReference type="FunFam" id="3.20.20.70:FF:000075">
    <property type="entry name" value="Tryptophan biosynthesis protein TRP1"/>
    <property type="match status" value="1"/>
</dbReference>
<dbReference type="Gene3D" id="3.20.20.70">
    <property type="entry name" value="Aldolase class I"/>
    <property type="match status" value="1"/>
</dbReference>
<dbReference type="HAMAP" id="MF_00135">
    <property type="entry name" value="PRAI"/>
    <property type="match status" value="1"/>
</dbReference>
<dbReference type="InterPro" id="IPR013785">
    <property type="entry name" value="Aldolase_TIM"/>
</dbReference>
<dbReference type="InterPro" id="IPR001240">
    <property type="entry name" value="PRAI_dom"/>
</dbReference>
<dbReference type="InterPro" id="IPR011060">
    <property type="entry name" value="RibuloseP-bd_barrel"/>
</dbReference>
<dbReference type="InterPro" id="IPR044643">
    <property type="entry name" value="TrpF_fam"/>
</dbReference>
<dbReference type="NCBIfam" id="NF002298">
    <property type="entry name" value="PRK01222.1-4"/>
    <property type="match status" value="1"/>
</dbReference>
<dbReference type="NCBIfam" id="NF002299">
    <property type="entry name" value="PRK01222.1-6"/>
    <property type="match status" value="1"/>
</dbReference>
<dbReference type="PANTHER" id="PTHR42894">
    <property type="entry name" value="N-(5'-PHOSPHORIBOSYL)ANTHRANILATE ISOMERASE"/>
    <property type="match status" value="1"/>
</dbReference>
<dbReference type="PANTHER" id="PTHR42894:SF1">
    <property type="entry name" value="N-(5'-PHOSPHORIBOSYL)ANTHRANILATE ISOMERASE"/>
    <property type="match status" value="1"/>
</dbReference>
<dbReference type="Pfam" id="PF00697">
    <property type="entry name" value="PRAI"/>
    <property type="match status" value="1"/>
</dbReference>
<dbReference type="SUPFAM" id="SSF51366">
    <property type="entry name" value="Ribulose-phoshate binding barrel"/>
    <property type="match status" value="1"/>
</dbReference>
<evidence type="ECO:0000255" key="1">
    <source>
        <dbReference type="HAMAP-Rule" id="MF_00135"/>
    </source>
</evidence>
<organism>
    <name type="scientific">Pseudomonas paraeruginosa (strain DSM 24068 / PA7)</name>
    <name type="common">Pseudomonas aeruginosa (strain PA7)</name>
    <dbReference type="NCBI Taxonomy" id="381754"/>
    <lineage>
        <taxon>Bacteria</taxon>
        <taxon>Pseudomonadati</taxon>
        <taxon>Pseudomonadota</taxon>
        <taxon>Gammaproteobacteria</taxon>
        <taxon>Pseudomonadales</taxon>
        <taxon>Pseudomonadaceae</taxon>
        <taxon>Pseudomonas</taxon>
        <taxon>Pseudomonas paraeruginosa</taxon>
    </lineage>
</organism>
<proteinExistence type="inferred from homology"/>
<reference key="1">
    <citation type="submission" date="2007-06" db="EMBL/GenBank/DDBJ databases">
        <authorList>
            <person name="Dodson R.J."/>
            <person name="Harkins D."/>
            <person name="Paulsen I.T."/>
        </authorList>
    </citation>
    <scope>NUCLEOTIDE SEQUENCE [LARGE SCALE GENOMIC DNA]</scope>
    <source>
        <strain>DSM 24068 / PA7</strain>
    </source>
</reference>
<keyword id="KW-0028">Amino-acid biosynthesis</keyword>
<keyword id="KW-0057">Aromatic amino acid biosynthesis</keyword>
<keyword id="KW-0413">Isomerase</keyword>
<keyword id="KW-0822">Tryptophan biosynthesis</keyword>